<accession>B1KWD6</accession>
<keyword id="KW-0450">Lipoyl</keyword>
<dbReference type="EMBL" id="CP000962">
    <property type="protein sequence ID" value="ACA56591.1"/>
    <property type="molecule type" value="Genomic_DNA"/>
</dbReference>
<dbReference type="RefSeq" id="WP_003356629.1">
    <property type="nucleotide sequence ID" value="NC_010520.1"/>
</dbReference>
<dbReference type="SMR" id="B1KWD6"/>
<dbReference type="KEGG" id="cbl:CLK_0098"/>
<dbReference type="HOGENOM" id="CLU_097408_2_2_9"/>
<dbReference type="GO" id="GO:0005829">
    <property type="term" value="C:cytosol"/>
    <property type="evidence" value="ECO:0007669"/>
    <property type="project" value="TreeGrafter"/>
</dbReference>
<dbReference type="GO" id="GO:0005960">
    <property type="term" value="C:glycine cleavage complex"/>
    <property type="evidence" value="ECO:0007669"/>
    <property type="project" value="InterPro"/>
</dbReference>
<dbReference type="GO" id="GO:0019464">
    <property type="term" value="P:glycine decarboxylation via glycine cleavage system"/>
    <property type="evidence" value="ECO:0007669"/>
    <property type="project" value="UniProtKB-UniRule"/>
</dbReference>
<dbReference type="CDD" id="cd06848">
    <property type="entry name" value="GCS_H"/>
    <property type="match status" value="1"/>
</dbReference>
<dbReference type="Gene3D" id="2.40.50.100">
    <property type="match status" value="1"/>
</dbReference>
<dbReference type="HAMAP" id="MF_00272">
    <property type="entry name" value="GcvH"/>
    <property type="match status" value="1"/>
</dbReference>
<dbReference type="InterPro" id="IPR003016">
    <property type="entry name" value="2-oxoA_DH_lipoyl-BS"/>
</dbReference>
<dbReference type="InterPro" id="IPR000089">
    <property type="entry name" value="Biotin_lipoyl"/>
</dbReference>
<dbReference type="InterPro" id="IPR002930">
    <property type="entry name" value="GCV_H"/>
</dbReference>
<dbReference type="InterPro" id="IPR033753">
    <property type="entry name" value="GCV_H/Fam206"/>
</dbReference>
<dbReference type="InterPro" id="IPR017453">
    <property type="entry name" value="GCV_H_sub"/>
</dbReference>
<dbReference type="InterPro" id="IPR011053">
    <property type="entry name" value="Single_hybrid_motif"/>
</dbReference>
<dbReference type="NCBIfam" id="TIGR00527">
    <property type="entry name" value="gcvH"/>
    <property type="match status" value="1"/>
</dbReference>
<dbReference type="NCBIfam" id="NF002270">
    <property type="entry name" value="PRK01202.1"/>
    <property type="match status" value="1"/>
</dbReference>
<dbReference type="PANTHER" id="PTHR11715">
    <property type="entry name" value="GLYCINE CLEAVAGE SYSTEM H PROTEIN"/>
    <property type="match status" value="1"/>
</dbReference>
<dbReference type="PANTHER" id="PTHR11715:SF3">
    <property type="entry name" value="GLYCINE CLEAVAGE SYSTEM H PROTEIN-RELATED"/>
    <property type="match status" value="1"/>
</dbReference>
<dbReference type="Pfam" id="PF01597">
    <property type="entry name" value="GCV_H"/>
    <property type="match status" value="1"/>
</dbReference>
<dbReference type="SUPFAM" id="SSF51230">
    <property type="entry name" value="Single hybrid motif"/>
    <property type="match status" value="1"/>
</dbReference>
<dbReference type="PROSITE" id="PS50968">
    <property type="entry name" value="BIOTINYL_LIPOYL"/>
    <property type="match status" value="1"/>
</dbReference>
<dbReference type="PROSITE" id="PS00189">
    <property type="entry name" value="LIPOYL"/>
    <property type="match status" value="1"/>
</dbReference>
<comment type="function">
    <text evidence="1">The glycine cleavage system catalyzes the degradation of glycine. The H protein shuttles the methylamine group of glycine from the P protein to the T protein.</text>
</comment>
<comment type="cofactor">
    <cofactor evidence="1">
        <name>(R)-lipoate</name>
        <dbReference type="ChEBI" id="CHEBI:83088"/>
    </cofactor>
    <text evidence="1">Binds 1 lipoyl cofactor covalently.</text>
</comment>
<comment type="subunit">
    <text evidence="1">The glycine cleavage system is composed of four proteins: P, T, L and H.</text>
</comment>
<comment type="similarity">
    <text evidence="1">Belongs to the GcvH family.</text>
</comment>
<sequence length="130" mass="14647">MKVLNNLLYTGDHEWIRVEDNKAYIGISDCAQRMLSDIVFVELPEVDDEIAKGETFATIESVKAASDSYMPVSGTIVEINEELEDNPAALNEDPYGSWIIAVEMSDKSELEELIKPEVYEKICEELDKEA</sequence>
<name>GCSH_CLOBM</name>
<organism>
    <name type="scientific">Clostridium botulinum (strain Loch Maree / Type A3)</name>
    <dbReference type="NCBI Taxonomy" id="498214"/>
    <lineage>
        <taxon>Bacteria</taxon>
        <taxon>Bacillati</taxon>
        <taxon>Bacillota</taxon>
        <taxon>Clostridia</taxon>
        <taxon>Eubacteriales</taxon>
        <taxon>Clostridiaceae</taxon>
        <taxon>Clostridium</taxon>
    </lineage>
</organism>
<evidence type="ECO:0000255" key="1">
    <source>
        <dbReference type="HAMAP-Rule" id="MF_00272"/>
    </source>
</evidence>
<evidence type="ECO:0000255" key="2">
    <source>
        <dbReference type="PROSITE-ProRule" id="PRU01066"/>
    </source>
</evidence>
<gene>
    <name evidence="1" type="primary">gcvH</name>
    <name type="ordered locus">CLK_0098</name>
</gene>
<feature type="chain" id="PRO_1000114512" description="Glycine cleavage system H protein">
    <location>
        <begin position="1"/>
        <end position="130"/>
    </location>
</feature>
<feature type="domain" description="Lipoyl-binding" evidence="2">
    <location>
        <begin position="22"/>
        <end position="103"/>
    </location>
</feature>
<feature type="modified residue" description="N6-lipoyllysine" evidence="1">
    <location>
        <position position="63"/>
    </location>
</feature>
<protein>
    <recommendedName>
        <fullName evidence="1">Glycine cleavage system H protein</fullName>
    </recommendedName>
</protein>
<proteinExistence type="inferred from homology"/>
<reference key="1">
    <citation type="journal article" date="2007" name="PLoS ONE">
        <title>Analysis of the neurotoxin complex genes in Clostridium botulinum A1-A4 and B1 strains: BoNT/A3, /Ba4 and /B1 clusters are located within plasmids.</title>
        <authorList>
            <person name="Smith T.J."/>
            <person name="Hill K.K."/>
            <person name="Foley B.T."/>
            <person name="Detter J.C."/>
            <person name="Munk A.C."/>
            <person name="Bruce D.C."/>
            <person name="Doggett N.A."/>
            <person name="Smith L.A."/>
            <person name="Marks J.D."/>
            <person name="Xie G."/>
            <person name="Brettin T.S."/>
        </authorList>
    </citation>
    <scope>NUCLEOTIDE SEQUENCE [LARGE SCALE GENOMIC DNA]</scope>
    <source>
        <strain>Loch Maree / Type A3</strain>
    </source>
</reference>